<dbReference type="EMBL" id="X06233">
    <property type="protein sequence ID" value="CAA29579.1"/>
    <property type="molecule type" value="mRNA"/>
</dbReference>
<dbReference type="EMBL" id="M21064">
    <property type="protein sequence ID" value="AAA36326.1"/>
    <property type="molecule type" value="Genomic_DNA"/>
</dbReference>
<dbReference type="EMBL" id="M26311">
    <property type="protein sequence ID" value="AAA68480.1"/>
    <property type="molecule type" value="mRNA"/>
</dbReference>
<dbReference type="EMBL" id="AF237581">
    <property type="protein sequence ID" value="AAF62536.1"/>
    <property type="molecule type" value="Genomic_DNA"/>
</dbReference>
<dbReference type="EMBL" id="AF237582">
    <property type="protein sequence ID" value="AAF62537.1"/>
    <property type="molecule type" value="Genomic_DNA"/>
</dbReference>
<dbReference type="EMBL" id="CR542207">
    <property type="protein sequence ID" value="CAG47003.1"/>
    <property type="molecule type" value="mRNA"/>
</dbReference>
<dbReference type="EMBL" id="CR542224">
    <property type="protein sequence ID" value="CAG47020.1"/>
    <property type="molecule type" value="mRNA"/>
</dbReference>
<dbReference type="EMBL" id="AL591704">
    <property type="status" value="NOT_ANNOTATED_CDS"/>
    <property type="molecule type" value="Genomic_DNA"/>
</dbReference>
<dbReference type="EMBL" id="CH471121">
    <property type="protein sequence ID" value="EAW53333.1"/>
    <property type="molecule type" value="Genomic_DNA"/>
</dbReference>
<dbReference type="EMBL" id="CH471121">
    <property type="protein sequence ID" value="EAW53334.1"/>
    <property type="molecule type" value="Genomic_DNA"/>
</dbReference>
<dbReference type="EMBL" id="BC047681">
    <property type="protein sequence ID" value="AAH47681.1"/>
    <property type="molecule type" value="mRNA"/>
</dbReference>
<dbReference type="CCDS" id="CCDS1036.1"/>
<dbReference type="PIR" id="B31848">
    <property type="entry name" value="B31848"/>
</dbReference>
<dbReference type="RefSeq" id="NP_002956.1">
    <property type="nucleotide sequence ID" value="NM_002965.4"/>
</dbReference>
<dbReference type="PDB" id="1IRJ">
    <property type="method" value="X-ray"/>
    <property type="resolution" value="2.10 A"/>
    <property type="chains" value="A/B/C/D/E/F/G/H=2-114"/>
</dbReference>
<dbReference type="PDB" id="1XK4">
    <property type="method" value="X-ray"/>
    <property type="resolution" value="1.80 A"/>
    <property type="chains" value="C/D/G/H/K/L=2-114"/>
</dbReference>
<dbReference type="PDB" id="4GGF">
    <property type="method" value="X-ray"/>
    <property type="resolution" value="1.60 A"/>
    <property type="chains" value="C/L/T/V=1-114"/>
</dbReference>
<dbReference type="PDB" id="4XJK">
    <property type="method" value="X-ray"/>
    <property type="resolution" value="1.76 A"/>
    <property type="chains" value="B/D/F/H/J=1-114"/>
</dbReference>
<dbReference type="PDB" id="5I8N">
    <property type="method" value="NMR"/>
    <property type="chains" value="A/B=1-114"/>
</dbReference>
<dbReference type="PDB" id="5W1F">
    <property type="method" value="X-ray"/>
    <property type="resolution" value="2.60 A"/>
    <property type="chains" value="B/D/F/H=1-114"/>
</dbReference>
<dbReference type="PDB" id="6DS2">
    <property type="method" value="X-ray"/>
    <property type="resolution" value="2.10 A"/>
    <property type="chains" value="B/D/F/H=1-114"/>
</dbReference>
<dbReference type="PDB" id="7QUV">
    <property type="method" value="X-ray"/>
    <property type="resolution" value="1.85 A"/>
    <property type="chains" value="B=1-114"/>
</dbReference>
<dbReference type="PDB" id="7UI5">
    <property type="method" value="NMR"/>
    <property type="chains" value="A/B=1-114"/>
</dbReference>
<dbReference type="PDB" id="8SJB">
    <property type="method" value="X-ray"/>
    <property type="resolution" value="1.74 A"/>
    <property type="chains" value="C/D=5-103"/>
</dbReference>
<dbReference type="PDB" id="8SJC">
    <property type="method" value="X-ray"/>
    <property type="resolution" value="1.87 A"/>
    <property type="chains" value="C/D=5-112"/>
</dbReference>
<dbReference type="PDBsum" id="1IRJ"/>
<dbReference type="PDBsum" id="1XK4"/>
<dbReference type="PDBsum" id="4GGF"/>
<dbReference type="PDBsum" id="4XJK"/>
<dbReference type="PDBsum" id="5I8N"/>
<dbReference type="PDBsum" id="5W1F"/>
<dbReference type="PDBsum" id="6DS2"/>
<dbReference type="PDBsum" id="7QUV"/>
<dbReference type="PDBsum" id="7UI5"/>
<dbReference type="PDBsum" id="8SJB"/>
<dbReference type="PDBsum" id="8SJC"/>
<dbReference type="SMR" id="P06702"/>
<dbReference type="BioGRID" id="112188">
    <property type="interactions" value="300"/>
</dbReference>
<dbReference type="ComplexPortal" id="CPX-37">
    <property type="entry name" value="Calprotectin heterotetramer"/>
</dbReference>
<dbReference type="ComplexPortal" id="CPX-39">
    <property type="entry name" value="Calprotectin heterodimer"/>
</dbReference>
<dbReference type="ComplexPortal" id="CPX-48">
    <property type="entry name" value="S100A9 complex"/>
</dbReference>
<dbReference type="ComplexPortal" id="CPX-52">
    <property type="entry name" value="iNOS-S100A8/A9 complex"/>
</dbReference>
<dbReference type="CORUM" id="P06702"/>
<dbReference type="DIP" id="DIP-1166N"/>
<dbReference type="FunCoup" id="P06702">
    <property type="interactions" value="743"/>
</dbReference>
<dbReference type="IntAct" id="P06702">
    <property type="interactions" value="159"/>
</dbReference>
<dbReference type="MINT" id="P06702"/>
<dbReference type="STRING" id="9606.ENSP00000357727"/>
<dbReference type="BindingDB" id="P06702"/>
<dbReference type="ChEMBL" id="CHEMBL4296265"/>
<dbReference type="DrugBank" id="DB01373">
    <property type="generic name" value="Calcium"/>
</dbReference>
<dbReference type="DrugBank" id="DB13118">
    <property type="generic name" value="Paquinimod"/>
</dbReference>
<dbReference type="DrugBank" id="DB05861">
    <property type="generic name" value="Tasquinimod"/>
</dbReference>
<dbReference type="DrugBank" id="DB01593">
    <property type="generic name" value="Zinc"/>
</dbReference>
<dbReference type="DrugBank" id="DB14487">
    <property type="generic name" value="Zinc acetate"/>
</dbReference>
<dbReference type="DrugBank" id="DB14533">
    <property type="generic name" value="Zinc chloride"/>
</dbReference>
<dbReference type="DrugBank" id="DB14548">
    <property type="generic name" value="Zinc sulfate, unspecified form"/>
</dbReference>
<dbReference type="MoonProt" id="P06702"/>
<dbReference type="GlyGen" id="P06702">
    <property type="glycosylation" value="2 sites, 1 O-linked glycan (1 site)"/>
</dbReference>
<dbReference type="iPTMnet" id="P06702"/>
<dbReference type="MetOSite" id="P06702"/>
<dbReference type="PhosphoSitePlus" id="P06702"/>
<dbReference type="SwissPalm" id="P06702"/>
<dbReference type="BioMuta" id="S100A9"/>
<dbReference type="DMDM" id="115444"/>
<dbReference type="OGP" id="P06702"/>
<dbReference type="CPTAC" id="CPTAC-1294"/>
<dbReference type="CPTAC" id="CPTAC-1295"/>
<dbReference type="CPTAC" id="non-CPTAC-1155"/>
<dbReference type="jPOST" id="P06702"/>
<dbReference type="MassIVE" id="P06702"/>
<dbReference type="PaxDb" id="9606-ENSP00000357727"/>
<dbReference type="PeptideAtlas" id="P06702"/>
<dbReference type="PRIDE" id="P06702"/>
<dbReference type="ProteomicsDB" id="51910"/>
<dbReference type="Pumba" id="P06702"/>
<dbReference type="TopDownProteomics" id="P06702"/>
<dbReference type="Antibodypedia" id="1084">
    <property type="antibodies" value="1381 antibodies from 46 providers"/>
</dbReference>
<dbReference type="CPTC" id="P06702">
    <property type="antibodies" value="2 antibodies"/>
</dbReference>
<dbReference type="DNASU" id="6280"/>
<dbReference type="Ensembl" id="ENST00000368738.4">
    <property type="protein sequence ID" value="ENSP00000357727.3"/>
    <property type="gene ID" value="ENSG00000163220.11"/>
</dbReference>
<dbReference type="GeneID" id="6280"/>
<dbReference type="KEGG" id="hsa:6280"/>
<dbReference type="MANE-Select" id="ENST00000368738.4">
    <property type="protein sequence ID" value="ENSP00000357727.3"/>
    <property type="RefSeq nucleotide sequence ID" value="NM_002965.4"/>
    <property type="RefSeq protein sequence ID" value="NP_002956.1"/>
</dbReference>
<dbReference type="UCSC" id="uc001fbq.3">
    <property type="organism name" value="human"/>
</dbReference>
<dbReference type="AGR" id="HGNC:10499"/>
<dbReference type="CTD" id="6280"/>
<dbReference type="DisGeNET" id="6280"/>
<dbReference type="GeneCards" id="S100A9"/>
<dbReference type="HGNC" id="HGNC:10499">
    <property type="gene designation" value="S100A9"/>
</dbReference>
<dbReference type="HPA" id="ENSG00000163220">
    <property type="expression patterns" value="Tissue enhanced (bone marrow, esophagus, vagina)"/>
</dbReference>
<dbReference type="MIM" id="123886">
    <property type="type" value="gene"/>
</dbReference>
<dbReference type="neXtProt" id="NX_P06702"/>
<dbReference type="OpenTargets" id="ENSG00000163220"/>
<dbReference type="PharmGKB" id="PA34911"/>
<dbReference type="VEuPathDB" id="HostDB:ENSG00000163220"/>
<dbReference type="eggNOG" id="ENOG502SA01">
    <property type="taxonomic scope" value="Eukaryota"/>
</dbReference>
<dbReference type="GeneTree" id="ENSGT00940000161606"/>
<dbReference type="HOGENOM" id="CLU_138624_6_0_1"/>
<dbReference type="InParanoid" id="P06702"/>
<dbReference type="OMA" id="SQMECSI"/>
<dbReference type="OrthoDB" id="9447434at2759"/>
<dbReference type="PAN-GO" id="P06702">
    <property type="GO annotations" value="15 GO annotations based on evolutionary models"/>
</dbReference>
<dbReference type="PhylomeDB" id="P06702"/>
<dbReference type="TreeFam" id="TF332727"/>
<dbReference type="PathwayCommons" id="P06702"/>
<dbReference type="Reactome" id="R-HSA-1236974">
    <property type="pathway name" value="ER-Phagosome pathway"/>
</dbReference>
<dbReference type="Reactome" id="R-HSA-166058">
    <property type="pathway name" value="MyD88:MAL(TIRAP) cascade initiated on plasma membrane"/>
</dbReference>
<dbReference type="Reactome" id="R-HSA-5602498">
    <property type="pathway name" value="MyD88 deficiency (TLR2/4)"/>
</dbReference>
<dbReference type="Reactome" id="R-HSA-5603041">
    <property type="pathway name" value="IRAK4 deficiency (TLR2/4)"/>
</dbReference>
<dbReference type="Reactome" id="R-HSA-5668599">
    <property type="pathway name" value="RHO GTPases Activate NADPH Oxidases"/>
</dbReference>
<dbReference type="Reactome" id="R-HSA-5686938">
    <property type="pathway name" value="Regulation of TLR by endogenous ligand"/>
</dbReference>
<dbReference type="Reactome" id="R-HSA-6798695">
    <property type="pathway name" value="Neutrophil degranulation"/>
</dbReference>
<dbReference type="Reactome" id="R-HSA-6799990">
    <property type="pathway name" value="Metal sequestration by antimicrobial proteins"/>
</dbReference>
<dbReference type="SignaLink" id="P06702"/>
<dbReference type="SIGNOR" id="P06702"/>
<dbReference type="BioGRID-ORCS" id="6280">
    <property type="hits" value="11 hits in 1152 CRISPR screens"/>
</dbReference>
<dbReference type="CD-CODE" id="232F8A39">
    <property type="entry name" value="P-body"/>
</dbReference>
<dbReference type="CD-CODE" id="91857CE7">
    <property type="entry name" value="Nucleolus"/>
</dbReference>
<dbReference type="CD-CODE" id="DEE660B4">
    <property type="entry name" value="Stress granule"/>
</dbReference>
<dbReference type="ChiTaRS" id="S100A9">
    <property type="organism name" value="human"/>
</dbReference>
<dbReference type="EvolutionaryTrace" id="P06702"/>
<dbReference type="GeneWiki" id="S100A9"/>
<dbReference type="GenomeRNAi" id="6280"/>
<dbReference type="Pharos" id="P06702">
    <property type="development level" value="Tchem"/>
</dbReference>
<dbReference type="PRO" id="PR:P06702"/>
<dbReference type="Proteomes" id="UP000005640">
    <property type="component" value="Chromosome 1"/>
</dbReference>
<dbReference type="RNAct" id="P06702">
    <property type="molecule type" value="protein"/>
</dbReference>
<dbReference type="Bgee" id="ENSG00000163220">
    <property type="expression patterns" value="Expressed in monocyte and 165 other cell types or tissues"/>
</dbReference>
<dbReference type="GO" id="GO:1990660">
    <property type="term" value="C:calprotectin complex"/>
    <property type="evidence" value="ECO:0000353"/>
    <property type="project" value="ComplexPortal"/>
</dbReference>
<dbReference type="GO" id="GO:0062023">
    <property type="term" value="C:collagen-containing extracellular matrix"/>
    <property type="evidence" value="ECO:0007005"/>
    <property type="project" value="BHF-UCL"/>
</dbReference>
<dbReference type="GO" id="GO:0005737">
    <property type="term" value="C:cytoplasm"/>
    <property type="evidence" value="ECO:0000314"/>
    <property type="project" value="UniProtKB"/>
</dbReference>
<dbReference type="GO" id="GO:0005856">
    <property type="term" value="C:cytoskeleton"/>
    <property type="evidence" value="ECO:0000304"/>
    <property type="project" value="UniProtKB"/>
</dbReference>
<dbReference type="GO" id="GO:0005829">
    <property type="term" value="C:cytosol"/>
    <property type="evidence" value="ECO:0000304"/>
    <property type="project" value="UniProtKB"/>
</dbReference>
<dbReference type="GO" id="GO:0070062">
    <property type="term" value="C:extracellular exosome"/>
    <property type="evidence" value="ECO:0007005"/>
    <property type="project" value="UniProtKB"/>
</dbReference>
<dbReference type="GO" id="GO:0005576">
    <property type="term" value="C:extracellular region"/>
    <property type="evidence" value="ECO:0007005"/>
    <property type="project" value="BHF-UCL"/>
</dbReference>
<dbReference type="GO" id="GO:0005615">
    <property type="term" value="C:extracellular space"/>
    <property type="evidence" value="ECO:0000314"/>
    <property type="project" value="UniProtKB"/>
</dbReference>
<dbReference type="GO" id="GO:0005634">
    <property type="term" value="C:nucleus"/>
    <property type="evidence" value="ECO:0007005"/>
    <property type="project" value="UniProtKB"/>
</dbReference>
<dbReference type="GO" id="GO:0005886">
    <property type="term" value="C:plasma membrane"/>
    <property type="evidence" value="ECO:0000304"/>
    <property type="project" value="UniProtKB"/>
</dbReference>
<dbReference type="GO" id="GO:1990662">
    <property type="term" value="C:S100A9 complex"/>
    <property type="evidence" value="ECO:0000353"/>
    <property type="project" value="ComplexPortal"/>
</dbReference>
<dbReference type="GO" id="GO:0034774">
    <property type="term" value="C:secretory granule lumen"/>
    <property type="evidence" value="ECO:0000304"/>
    <property type="project" value="Reactome"/>
</dbReference>
<dbReference type="GO" id="GO:0016209">
    <property type="term" value="F:antioxidant activity"/>
    <property type="evidence" value="ECO:0007669"/>
    <property type="project" value="UniProtKB-KW"/>
</dbReference>
<dbReference type="GO" id="GO:0050544">
    <property type="term" value="F:arachidonate binding"/>
    <property type="evidence" value="ECO:0000304"/>
    <property type="project" value="UniProtKB"/>
</dbReference>
<dbReference type="GO" id="GO:0005509">
    <property type="term" value="F:calcium ion binding"/>
    <property type="evidence" value="ECO:0000318"/>
    <property type="project" value="GO_Central"/>
</dbReference>
<dbReference type="GO" id="GO:0048306">
    <property type="term" value="F:calcium-dependent protein binding"/>
    <property type="evidence" value="ECO:0000318"/>
    <property type="project" value="GO_Central"/>
</dbReference>
<dbReference type="GO" id="GO:0008017">
    <property type="term" value="F:microtubule binding"/>
    <property type="evidence" value="ECO:0000304"/>
    <property type="project" value="UniProtKB"/>
</dbReference>
<dbReference type="GO" id="GO:0050786">
    <property type="term" value="F:RAGE receptor binding"/>
    <property type="evidence" value="ECO:0000304"/>
    <property type="project" value="UniProtKB"/>
</dbReference>
<dbReference type="GO" id="GO:0035662">
    <property type="term" value="F:Toll-like receptor 4 binding"/>
    <property type="evidence" value="ECO:0000304"/>
    <property type="project" value="UniProtKB"/>
</dbReference>
<dbReference type="GO" id="GO:0008270">
    <property type="term" value="F:zinc ion binding"/>
    <property type="evidence" value="ECO:0000304"/>
    <property type="project" value="UniProtKB"/>
</dbReference>
<dbReference type="GO" id="GO:0061844">
    <property type="term" value="P:antimicrobial humoral immune response mediated by antimicrobial peptide"/>
    <property type="evidence" value="ECO:0000314"/>
    <property type="project" value="UniProtKB"/>
</dbReference>
<dbReference type="GO" id="GO:0006915">
    <property type="term" value="P:apoptotic process"/>
    <property type="evidence" value="ECO:0007669"/>
    <property type="project" value="UniProtKB-KW"/>
</dbReference>
<dbReference type="GO" id="GO:0014002">
    <property type="term" value="P:astrocyte development"/>
    <property type="evidence" value="ECO:0000318"/>
    <property type="project" value="GO_Central"/>
</dbReference>
<dbReference type="GO" id="GO:0035425">
    <property type="term" value="P:autocrine signaling"/>
    <property type="evidence" value="ECO:0000318"/>
    <property type="project" value="GO_Central"/>
</dbReference>
<dbReference type="GO" id="GO:0006914">
    <property type="term" value="P:autophagy"/>
    <property type="evidence" value="ECO:0000314"/>
    <property type="project" value="UniProtKB"/>
</dbReference>
<dbReference type="GO" id="GO:0007267">
    <property type="term" value="P:cell-cell signaling"/>
    <property type="evidence" value="ECO:0000304"/>
    <property type="project" value="ProtInc"/>
</dbReference>
<dbReference type="GO" id="GO:0002544">
    <property type="term" value="P:chronic inflammatory response"/>
    <property type="evidence" value="ECO:0000318"/>
    <property type="project" value="GO_Central"/>
</dbReference>
<dbReference type="GO" id="GO:0042742">
    <property type="term" value="P:defense response to bacterium"/>
    <property type="evidence" value="ECO:0000304"/>
    <property type="project" value="UniProtKB"/>
</dbReference>
<dbReference type="GO" id="GO:0050832">
    <property type="term" value="P:defense response to fungus"/>
    <property type="evidence" value="ECO:0000304"/>
    <property type="project" value="UniProtKB"/>
</dbReference>
<dbReference type="GO" id="GO:0043542">
    <property type="term" value="P:endothelial cell migration"/>
    <property type="evidence" value="ECO:0000318"/>
    <property type="project" value="GO_Central"/>
</dbReference>
<dbReference type="GO" id="GO:0006954">
    <property type="term" value="P:inflammatory response"/>
    <property type="evidence" value="ECO:0000304"/>
    <property type="project" value="ProtInc"/>
</dbReference>
<dbReference type="GO" id="GO:0045087">
    <property type="term" value="P:innate immune response"/>
    <property type="evidence" value="ECO:0007669"/>
    <property type="project" value="UniProtKB-KW"/>
</dbReference>
<dbReference type="GO" id="GO:0002523">
    <property type="term" value="P:leukocyte migration involved in inflammatory response"/>
    <property type="evidence" value="ECO:0000314"/>
    <property type="project" value="UniProtKB"/>
</dbReference>
<dbReference type="GO" id="GO:0070488">
    <property type="term" value="P:neutrophil aggregation"/>
    <property type="evidence" value="ECO:0000314"/>
    <property type="project" value="UniProtKB"/>
</dbReference>
<dbReference type="GO" id="GO:0030593">
    <property type="term" value="P:neutrophil chemotaxis"/>
    <property type="evidence" value="ECO:0000314"/>
    <property type="project" value="UniProtKB"/>
</dbReference>
<dbReference type="GO" id="GO:0035606">
    <property type="term" value="P:peptidyl-cysteine S-trans-nitrosylation"/>
    <property type="evidence" value="ECO:0000314"/>
    <property type="project" value="UniProtKB"/>
</dbReference>
<dbReference type="GO" id="GO:0030307">
    <property type="term" value="P:positive regulation of cell growth"/>
    <property type="evidence" value="ECO:0000304"/>
    <property type="project" value="UniProtKB"/>
</dbReference>
<dbReference type="GO" id="GO:0050729">
    <property type="term" value="P:positive regulation of inflammatory response"/>
    <property type="evidence" value="ECO:0000314"/>
    <property type="project" value="UniProtKB"/>
</dbReference>
<dbReference type="GO" id="GO:2001244">
    <property type="term" value="P:positive regulation of intrinsic apoptotic signaling pathway"/>
    <property type="evidence" value="ECO:0000314"/>
    <property type="project" value="UniProtKB"/>
</dbReference>
<dbReference type="GO" id="GO:0010976">
    <property type="term" value="P:positive regulation of neuron projection development"/>
    <property type="evidence" value="ECO:0000250"/>
    <property type="project" value="ARUK-UCL"/>
</dbReference>
<dbReference type="GO" id="GO:0051092">
    <property type="term" value="P:positive regulation of NF-kappaB transcription factor activity"/>
    <property type="evidence" value="ECO:0000304"/>
    <property type="project" value="UniProtKB"/>
</dbReference>
<dbReference type="GO" id="GO:0051493">
    <property type="term" value="P:regulation of cytoskeleton organization"/>
    <property type="evidence" value="ECO:0000304"/>
    <property type="project" value="UniProtKB"/>
</dbReference>
<dbReference type="GO" id="GO:0060264">
    <property type="term" value="P:regulation of respiratory burst involved in inflammatory response"/>
    <property type="evidence" value="ECO:0000303"/>
    <property type="project" value="ComplexPortal"/>
</dbReference>
<dbReference type="GO" id="GO:0034121">
    <property type="term" value="P:regulation of toll-like receptor signaling pathway"/>
    <property type="evidence" value="ECO:0000303"/>
    <property type="project" value="ComplexPortal"/>
</dbReference>
<dbReference type="CDD" id="cd05030">
    <property type="entry name" value="calgranulins"/>
    <property type="match status" value="1"/>
</dbReference>
<dbReference type="FunFam" id="1.10.238.10:FF:000378">
    <property type="entry name" value="Protein S100-A9"/>
    <property type="match status" value="1"/>
</dbReference>
<dbReference type="Gene3D" id="1.10.238.10">
    <property type="entry name" value="EF-hand"/>
    <property type="match status" value="1"/>
</dbReference>
<dbReference type="InterPro" id="IPR011992">
    <property type="entry name" value="EF-hand-dom_pair"/>
</dbReference>
<dbReference type="InterPro" id="IPR018247">
    <property type="entry name" value="EF_Hand_1_Ca_BS"/>
</dbReference>
<dbReference type="InterPro" id="IPR002048">
    <property type="entry name" value="EF_hand_dom"/>
</dbReference>
<dbReference type="InterPro" id="IPR001751">
    <property type="entry name" value="S100/CaBP7/8-like_CS"/>
</dbReference>
<dbReference type="InterPro" id="IPR013787">
    <property type="entry name" value="S100_Ca-bd_sub"/>
</dbReference>
<dbReference type="PANTHER" id="PTHR11639:SF79">
    <property type="entry name" value="PROTEIN S100-A9"/>
    <property type="match status" value="1"/>
</dbReference>
<dbReference type="PANTHER" id="PTHR11639">
    <property type="entry name" value="S100 CALCIUM-BINDING PROTEIN"/>
    <property type="match status" value="1"/>
</dbReference>
<dbReference type="Pfam" id="PF01023">
    <property type="entry name" value="S_100"/>
    <property type="match status" value="1"/>
</dbReference>
<dbReference type="SMART" id="SM00054">
    <property type="entry name" value="EFh"/>
    <property type="match status" value="1"/>
</dbReference>
<dbReference type="SMART" id="SM01394">
    <property type="entry name" value="S_100"/>
    <property type="match status" value="1"/>
</dbReference>
<dbReference type="SUPFAM" id="SSF47473">
    <property type="entry name" value="EF-hand"/>
    <property type="match status" value="1"/>
</dbReference>
<dbReference type="PROSITE" id="PS00018">
    <property type="entry name" value="EF_HAND_1"/>
    <property type="match status" value="1"/>
</dbReference>
<dbReference type="PROSITE" id="PS50222">
    <property type="entry name" value="EF_HAND_2"/>
    <property type="match status" value="1"/>
</dbReference>
<dbReference type="PROSITE" id="PS00303">
    <property type="entry name" value="S100_CABP"/>
    <property type="match status" value="1"/>
</dbReference>
<comment type="function">
    <text evidence="7 8 9 10 12 15 16 17 18 19 20 21 22 23 26 27 29 30 33 37 38">S100A9 is a calcium- and zinc-binding protein which plays a prominent role in the regulation of inflammatory processes and immune response (PubMed:12626582, PubMed:15331440, PubMed:16258195, PubMed:19122197, PubMed:20103766, PubMed:21325622, PubMed:8423249). It can induce neutrophil chemotaxis, adhesion, can increase the bactericidal activity of neutrophils by promoting phagocytosis via activation of SYK, PI3K/AKT, and ERK1/2 and can induce degranulation of neutrophils by a MAPK-dependent mechanism (PubMed:12626582, PubMed:15331440, PubMed:20103766). Predominantly found as calprotectin (S100A8/A9) which has a wide plethora of intra- and extracellular functions (PubMed:16258195, PubMed:19122197, PubMed:8423249). The intracellular functions include: facilitating leukocyte arachidonic acid trafficking and metabolism, modulation of the tubulin-dependent cytoskeleton during migration of phagocytes and activation of the neutrophilic NADPH-oxidase (PubMed:15331440, PubMed:21325622). Also participates in regulatory T-cell differentiation together with CD69 (PubMed:26296369). Activates NADPH-oxidase by facilitating the enzyme complex assembly at the cell membrane, transferring arachidonic acid, an essential cofactor, to the enzyme complex and S100A8 contributes to the enzyme assembly by directly binding to NCF2/P67PHOX (PubMed:15642721, PubMed:22808130). The extracellular functions involve pro-inflammatory, antimicrobial, oxidant-scavenging and apoptosis-inducing activities (PubMed:19534726, PubMed:8423249). Its pro-inflammatory activity includes recruitment of leukocytes, promotion of cytokine and chemokine production, and regulation of leukocyte adhesion and migration (PubMed:15598812, PubMed:21487906). Acts as an alarmin or a danger associated molecular pattern (DAMP) molecule and stimulates innate immune cells via binding to pattern recognition receptors such as Toll-like receptor 4 (TLR4) and receptor for advanced glycation endproducts (AGER) (PubMed:19402754). Binding to TLR4 and AGER activates the MAP-kinase and NF-kappa-B signaling pathways resulting in the amplification of the pro-inflammatory cascade (PubMed:19402754, PubMed:22804476). Has antimicrobial activity towards bacteria and fungi and exerts its antimicrobial activity probably via chelation of Zn(2+) which is essential for microbial growth (PubMed:19087201). Can induce cell death via autophagy and apoptosis and this occurs through the cross-talk of mitochondria and lysosomes via reactive oxygen species (ROS) and the process involves BNIP3 (PubMed:19935772). Can regulate neutrophil number and apoptosis by an anti-apoptotic effect; regulates cell survival via ITGAM/ITGB and TLR4 and a signaling mechanism involving MEK-ERK (PubMed:22363402). Its role as an oxidant scavenger has a protective role in preventing exaggerated tissue damage by scavenging oxidants (PubMed:21912088, PubMed:22489132). Can act as a potent amplifier of inflammation in autoimmunity as well as in cancer development and tumor spread (PubMed:16258195). Has transnitrosylase activity; in oxidatively-modified low-densitity lipoprotein (LDL(ox))-induced S-nitrosylation of GAPDH on 'Cys-247' proposed to transfer the NO moiety from NOS2/iNOS to GAPDH via its own S-nitrosylated Cys-3 (PubMed:25417112). The iNOS-S100A8/A9 transnitrosylase complex is proposed to also direct selective inflammatory stimulus-dependent S-nitrosylation of multiple targets such as ANXA5, EZR, MSN and VIM by recognizing a [IL]-x-C-x-x-[DE] motif (PubMed:25417112).</text>
</comment>
<comment type="subunit">
    <text evidence="1 5 6 10 12 13 14 15 16 17 24 27 29 30 33 34">Homodimer (PubMed:11851337, PubMed:16258195). Preferentially exists as a heterodimer or heterotetramer with S100A8 known as calprotectin (S100A8/A9) (PubMed:16258195, PubMed:17553524, PubMed:19087201, PubMed:19122197, PubMed:25417112, PubMed:8423249, PubMed:9083090). S100A9 interacts with ATP2A2 (By similarity). S100A9 interacts with AGER, and with the heterodimeric complex formed by TLR4 and LY96 in the presence of calcium and/or zinc ions (PubMed:19402754). S100A9 binds quinoline-3-carboxamides in the presence of calcium and/or zinc ions (PubMed:19402754). S100A9 interacts with amyloid-beta protein 40 (PubMed:22457725). Calprotectin (S100A8/9) interacts with CEACAM3 and tubulin filaments in a calcium-dependent manner (PubMed:11708798). Heterotetrameric calprotectin (S100A8/A9) interacts with ANXA6 and associates with tubulin filaments in activated monocytes (PubMed:18786929). Calprotectin (S100A8/9) interacts with NCF2/P67PHOX, RAC1, RAC2, CYBA and CYBB (PubMed:15642721, PubMed:22808130). Calprotectin (S100A8/9) interacts with NOS2 to form the iNOS-S100A8/A9 transnitrosylase complex; induced by LDL(ox) (PubMed:25417112). Calprotectin (S100A8/9) interacts with CD69 (PubMed:26296369).</text>
</comment>
<comment type="interaction">
    <interactant intactId="EBI-1055001">
        <id>P06702</id>
    </interactant>
    <interactant intactId="EBI-743313">
        <id>P49407</id>
        <label>ARRB1</label>
    </interactant>
    <organismsDiffer>false</organismsDiffer>
    <experiments>2</experiments>
</comment>
<comment type="interaction">
    <interactant intactId="EBI-1055001">
        <id>P06702</id>
    </interactant>
    <interactant intactId="EBI-714559">
        <id>P32121</id>
        <label>ARRB2</label>
    </interactant>
    <organismsDiffer>false</organismsDiffer>
    <experiments>2</experiments>
</comment>
<comment type="interaction">
    <interactant intactId="EBI-1055001">
        <id>P06702</id>
    </interactant>
    <interactant intactId="EBI-3906571">
        <id>P20138</id>
        <label>CD33</label>
    </interactant>
    <organismsDiffer>false</organismsDiffer>
    <experiments>5</experiments>
</comment>
<comment type="interaction">
    <interactant intactId="EBI-1055001">
        <id>P06702</id>
    </interactant>
    <interactant intactId="EBI-740978">
        <id>P43355</id>
        <label>MAGEA1</label>
    </interactant>
    <organismsDiffer>false</organismsDiffer>
    <experiments>3</experiments>
</comment>
<comment type="interaction">
    <interactant intactId="EBI-1055001">
        <id>P06702</id>
    </interactant>
    <interactant intactId="EBI-5651459">
        <id>P43357</id>
        <label>MAGEA3</label>
    </interactant>
    <organismsDiffer>false</organismsDiffer>
    <experiments>3</experiments>
</comment>
<comment type="interaction">
    <interactant intactId="EBI-1055001">
        <id>P06702</id>
    </interactant>
    <interactant intactId="EBI-1045155">
        <id>P43360</id>
        <label>MAGEA6</label>
    </interactant>
    <organismsDiffer>false</organismsDiffer>
    <experiments>3</experiments>
</comment>
<comment type="interaction">
    <interactant intactId="EBI-1055001">
        <id>P06702</id>
    </interactant>
    <interactant intactId="EBI-355281">
        <id>P05109</id>
        <label>S100A8</label>
    </interactant>
    <organismsDiffer>false</organismsDiffer>
    <experiments>7</experiments>
</comment>
<comment type="interaction">
    <interactant intactId="EBI-1055001">
        <id>P06702</id>
    </interactant>
    <interactant intactId="EBI-458391">
        <id>P04271</id>
        <label>S100B</label>
    </interactant>
    <organismsDiffer>false</organismsDiffer>
    <experiments>3</experiments>
</comment>
<comment type="subcellular location">
    <subcellularLocation>
        <location>Secreted</location>
    </subcellularLocation>
    <subcellularLocation>
        <location evidence="9 33">Cytoplasm</location>
    </subcellularLocation>
    <subcellularLocation>
        <location evidence="25 34">Cytoplasm</location>
        <location evidence="25 34">Cytoskeleton</location>
    </subcellularLocation>
    <subcellularLocation>
        <location evidence="14">Cell membrane</location>
        <topology evidence="43">Peripheral membrane protein</topology>
    </subcellularLocation>
    <text evidence="9 14">Predominantly localized in the cytoplasm. Upon elevation of the intracellular calcium level, translocated from the cytoplasm to the cytoskeleton and the cell membrane (PubMed:18786929). Upon neutrophil activation or endothelial adhesion of monocytes, is secreted via a microtubule-mediated, alternative pathway (PubMed:15598812).</text>
</comment>
<comment type="tissue specificity">
    <text evidence="9 31 32 33 34">Calprotectin (S100A8/9) is predominantly expressed in myeloid cells. Except for inflammatory conditions, the expression is restricted to a specific stage of myeloid differentiation since both proteins are expressed in circulating neutrophils and monocytes but are absent in normal tissue macrophages and lymphocytes. Under chronic inflammatory conditions, such as psoriasis and malignant disorders, also expressed in the epidermis. Found in high concentrations at local sites of inflammation or in the serum of patients with inflammatory diseases such as rheumatoid, cystic fibrosis, inflammatory bowel disease, Crohn's disease, giant cell arteritis, cystic fibrosis, Sjogren's syndrome, systemic lupus erythematosus, and progressive systemic sclerosis. Involved in the formation and deposition of amyloids in the aging prostate known as corpora amylacea inclusions. Strongly up-regulated in many tumors, including gastric, esophageal, colon, pancreatic, bladder, ovarian, thyroid, breast and skin cancers.</text>
</comment>
<comment type="PTM">
    <text evidence="8 11 28">Phosphorylated. Phosphorylation inhibits activation of tubulin polymerization.</text>
</comment>
<comment type="PTM">
    <text evidence="44">S-nitrosylation of Cys-3 is implicated in LDL(ox)-induced S-nitrosylation of GAPDH at 'Cys-247' through a transnitrosylase mechanism involving a iNOS-S100A8/9 complex (PubMed:25417112).</text>
</comment>
<comment type="PTM">
    <text evidence="1">Methylation at His-105 by METTL9 reduces zinc-binding without affecting heterodimerization with S100A8.</text>
</comment>
<comment type="mass spectrometry"/>
<comment type="similarity">
    <text evidence="41">Belongs to the S-100 family.</text>
</comment>
<comment type="online information" name="Atlas of Genetics and Cytogenetics in Oncology and Haematology">
    <link uri="https://atlasgeneticsoncology.org/gene/45569/S100A9"/>
</comment>
<organism>
    <name type="scientific">Homo sapiens</name>
    <name type="common">Human</name>
    <dbReference type="NCBI Taxonomy" id="9606"/>
    <lineage>
        <taxon>Eukaryota</taxon>
        <taxon>Metazoa</taxon>
        <taxon>Chordata</taxon>
        <taxon>Craniata</taxon>
        <taxon>Vertebrata</taxon>
        <taxon>Euteleostomi</taxon>
        <taxon>Mammalia</taxon>
        <taxon>Eutheria</taxon>
        <taxon>Euarchontoglires</taxon>
        <taxon>Primates</taxon>
        <taxon>Haplorrhini</taxon>
        <taxon>Catarrhini</taxon>
        <taxon>Hominidae</taxon>
        <taxon>Homo</taxon>
    </lineage>
</organism>
<gene>
    <name evidence="36 45" type="primary">S100A9</name>
    <name type="synonym">CAGB</name>
    <name type="synonym">CFAG</name>
    <name evidence="40" type="synonym">MRP14</name>
</gene>
<keyword id="KW-0002">3D-structure</keyword>
<keyword id="KW-0929">Antimicrobial</keyword>
<keyword id="KW-0049">Antioxidant</keyword>
<keyword id="KW-0053">Apoptosis</keyword>
<keyword id="KW-0072">Autophagy</keyword>
<keyword id="KW-0106">Calcium</keyword>
<keyword id="KW-1003">Cell membrane</keyword>
<keyword id="KW-0145">Chemotaxis</keyword>
<keyword id="KW-0963">Cytoplasm</keyword>
<keyword id="KW-0206">Cytoskeleton</keyword>
<keyword id="KW-0903">Direct protein sequencing</keyword>
<keyword id="KW-0391">Immunity</keyword>
<keyword id="KW-0395">Inflammatory response</keyword>
<keyword id="KW-0399">Innate immunity</keyword>
<keyword id="KW-0472">Membrane</keyword>
<keyword id="KW-0479">Metal-binding</keyword>
<keyword id="KW-0488">Methylation</keyword>
<keyword id="KW-0597">Phosphoprotein</keyword>
<keyword id="KW-1267">Proteomics identification</keyword>
<keyword id="KW-1185">Reference proteome</keyword>
<keyword id="KW-0677">Repeat</keyword>
<keyword id="KW-0702">S-nitrosylation</keyword>
<keyword id="KW-0964">Secreted</keyword>
<keyword id="KW-0862">Zinc</keyword>
<feature type="chain" id="PRO_0000143997" description="Protein S100-A9">
    <location>
        <begin position="1"/>
        <end position="114"/>
    </location>
</feature>
<feature type="domain" description="EF-hand 1" evidence="41">
    <location>
        <begin position="12"/>
        <end position="47"/>
    </location>
</feature>
<feature type="domain" description="EF-hand 2" evidence="3">
    <location>
        <begin position="54"/>
        <end position="89"/>
    </location>
</feature>
<feature type="region of interest" description="Disordered" evidence="4">
    <location>
        <begin position="93"/>
        <end position="114"/>
    </location>
</feature>
<feature type="compositionally biased region" description="Basic and acidic residues" evidence="4">
    <location>
        <begin position="93"/>
        <end position="102"/>
    </location>
</feature>
<feature type="binding site" evidence="42">
    <location>
        <position position="20"/>
    </location>
    <ligand>
        <name>Zn(2+)</name>
        <dbReference type="ChEBI" id="CHEBI:29105"/>
    </ligand>
</feature>
<feature type="binding site" evidence="6 13 46 47">
    <location>
        <position position="23"/>
    </location>
    <ligand>
        <name>Ca(2+)</name>
        <dbReference type="ChEBI" id="CHEBI:29108"/>
        <label>1</label>
        <note>low affinity</note>
    </ligand>
</feature>
<feature type="binding site" evidence="6 13 46 47">
    <location>
        <position position="26"/>
    </location>
    <ligand>
        <name>Ca(2+)</name>
        <dbReference type="ChEBI" id="CHEBI:29108"/>
        <label>1</label>
        <note>low affinity</note>
    </ligand>
</feature>
<feature type="binding site" evidence="6 13 46 47">
    <location>
        <position position="28"/>
    </location>
    <ligand>
        <name>Ca(2+)</name>
        <dbReference type="ChEBI" id="CHEBI:29108"/>
        <label>1</label>
        <note>low affinity</note>
    </ligand>
</feature>
<feature type="binding site" evidence="42">
    <location>
        <position position="30"/>
    </location>
    <ligand>
        <name>Zn(2+)</name>
        <dbReference type="ChEBI" id="CHEBI:29105"/>
    </ligand>
</feature>
<feature type="binding site" evidence="6 13 46 47">
    <location>
        <position position="31"/>
    </location>
    <ligand>
        <name>Ca(2+)</name>
        <dbReference type="ChEBI" id="CHEBI:29108"/>
        <label>1</label>
        <note>low affinity</note>
    </ligand>
</feature>
<feature type="binding site" evidence="6 13 46 47">
    <location>
        <position position="36"/>
    </location>
    <ligand>
        <name>Ca(2+)</name>
        <dbReference type="ChEBI" id="CHEBI:29108"/>
        <label>1</label>
        <note>low affinity</note>
    </ligand>
</feature>
<feature type="binding site" evidence="3 6 13 46 47">
    <location>
        <position position="67"/>
    </location>
    <ligand>
        <name>Ca(2+)</name>
        <dbReference type="ChEBI" id="CHEBI:29108"/>
        <label>2</label>
        <note>high affinity</note>
    </ligand>
</feature>
<feature type="binding site" evidence="3 6 13 46 47">
    <location>
        <position position="69"/>
    </location>
    <ligand>
        <name>Ca(2+)</name>
        <dbReference type="ChEBI" id="CHEBI:29108"/>
        <label>2</label>
        <note>high affinity</note>
    </ligand>
</feature>
<feature type="binding site" evidence="3 6 13 46 47">
    <location>
        <position position="71"/>
    </location>
    <ligand>
        <name>Ca(2+)</name>
        <dbReference type="ChEBI" id="CHEBI:29108"/>
        <label>2</label>
        <note>high affinity</note>
    </ligand>
</feature>
<feature type="binding site" evidence="3 6 13 46 47">
    <location>
        <position position="73"/>
    </location>
    <ligand>
        <name>Ca(2+)</name>
        <dbReference type="ChEBI" id="CHEBI:29108"/>
        <label>2</label>
        <note>high affinity</note>
    </ligand>
</feature>
<feature type="binding site" evidence="3 6 13 46 47">
    <location>
        <position position="78"/>
    </location>
    <ligand>
        <name>Ca(2+)</name>
        <dbReference type="ChEBI" id="CHEBI:29108"/>
        <label>2</label>
        <note>high affinity</note>
    </ligand>
</feature>
<feature type="binding site" evidence="42">
    <location>
        <position position="91"/>
    </location>
    <ligand>
        <name>Zn(2+)</name>
        <dbReference type="ChEBI" id="CHEBI:29105"/>
    </ligand>
</feature>
<feature type="binding site" evidence="42">
    <location>
        <position position="95"/>
    </location>
    <ligand>
        <name>Zn(2+)</name>
        <dbReference type="ChEBI" id="CHEBI:29105"/>
    </ligand>
</feature>
<feature type="modified residue" description="Blocked amino end (Thr)">
    <location>
        <position position="2"/>
    </location>
</feature>
<feature type="modified residue" description="S-nitrosocysteine; transient" evidence="44">
    <location>
        <position position="3"/>
    </location>
</feature>
<feature type="modified residue" description="Pros-methylhistidine" evidence="2">
    <location>
        <position position="105"/>
    </location>
</feature>
<feature type="modified residue" description="Phosphothreonine; by MAPK14" evidence="8 11 28 48 49 50 51">
    <location>
        <position position="113"/>
    </location>
</feature>
<feature type="sequence variant" id="VAR_013008" evidence="35">
    <original>H</original>
    <variation>R</variation>
    <location>
        <position position="20"/>
    </location>
</feature>
<feature type="mutagenesis site" description="Disrupts interaction with NOS2 and inhibits LDL(ox)-induced GAPDH S-nitrosylation; no effect on interaction with S100A8." evidence="29">
    <original>C</original>
    <variation>A</variation>
    <location>
        <position position="3"/>
    </location>
</feature>
<feature type="mutagenesis site" description="Loss of resistance to bacterial invasion; when associated with Q-78." evidence="16">
    <original>E</original>
    <variation>Q</variation>
    <location>
        <position position="36"/>
    </location>
</feature>
<feature type="mutagenesis site" description="Loss of antifungal activity." evidence="15">
    <original>M</original>
    <variation>A</variation>
    <location>
        <position position="63"/>
    </location>
</feature>
<feature type="mutagenesis site" description="Loss of resistance to bacterial invasion; when associated with Q-36." evidence="16">
    <original>E</original>
    <variation>Q</variation>
    <location>
        <position position="78"/>
    </location>
</feature>
<feature type="mutagenesis site" description="No effect on antifungal activity." evidence="15">
    <original>M</original>
    <variation>A</variation>
    <location>
        <position position="81"/>
    </location>
</feature>
<feature type="mutagenesis site" description="Loss of antifungal activity." evidence="15">
    <original>M</original>
    <variation>A</variation>
    <location>
        <position position="83"/>
    </location>
</feature>
<feature type="sequence conflict" description="In Ref. 12; AA sequence." evidence="41" ref="12">
    <original>S</original>
    <variation>H</variation>
    <location>
        <position position="6"/>
    </location>
</feature>
<feature type="sequence conflict" description="In Ref. 12; AA sequence." evidence="41" ref="12">
    <original>K</original>
    <variation>F</variation>
    <location>
        <position position="25"/>
    </location>
</feature>
<feature type="sequence conflict" description="In Ref. 12; AA sequence." evidence="41" ref="12">
    <original>H</original>
    <variation>L</variation>
    <location>
        <position position="28"/>
    </location>
</feature>
<feature type="helix" evidence="52">
    <location>
        <begin position="7"/>
        <end position="23"/>
    </location>
</feature>
<feature type="strand" evidence="52">
    <location>
        <begin position="25"/>
        <end position="28"/>
    </location>
</feature>
<feature type="helix" evidence="52">
    <location>
        <begin position="34"/>
        <end position="44"/>
    </location>
</feature>
<feature type="turn" evidence="52">
    <location>
        <begin position="45"/>
        <end position="49"/>
    </location>
</feature>
<feature type="helix" evidence="52">
    <location>
        <begin position="50"/>
        <end position="53"/>
    </location>
</feature>
<feature type="helix" evidence="52">
    <location>
        <begin position="56"/>
        <end position="66"/>
    </location>
</feature>
<feature type="strand" evidence="52">
    <location>
        <begin position="71"/>
        <end position="74"/>
    </location>
</feature>
<feature type="helix" evidence="52">
    <location>
        <begin position="76"/>
        <end position="94"/>
    </location>
</feature>
<feature type="turn" evidence="52">
    <location>
        <begin position="95"/>
        <end position="97"/>
    </location>
</feature>
<feature type="turn" evidence="53">
    <location>
        <begin position="108"/>
        <end position="110"/>
    </location>
</feature>
<evidence type="ECO:0000250" key="1">
    <source>
        <dbReference type="UniProtKB" id="P31725"/>
    </source>
</evidence>
<evidence type="ECO:0000250" key="2">
    <source>
        <dbReference type="UniProtKB" id="P50116"/>
    </source>
</evidence>
<evidence type="ECO:0000255" key="3">
    <source>
        <dbReference type="PROSITE-ProRule" id="PRU00448"/>
    </source>
</evidence>
<evidence type="ECO:0000256" key="4">
    <source>
        <dbReference type="SAM" id="MobiDB-lite"/>
    </source>
</evidence>
<evidence type="ECO:0000269" key="5">
    <source>
    </source>
</evidence>
<evidence type="ECO:0000269" key="6">
    <source>
    </source>
</evidence>
<evidence type="ECO:0000269" key="7">
    <source>
    </source>
</evidence>
<evidence type="ECO:0000269" key="8">
    <source>
    </source>
</evidence>
<evidence type="ECO:0000269" key="9">
    <source>
    </source>
</evidence>
<evidence type="ECO:0000269" key="10">
    <source>
    </source>
</evidence>
<evidence type="ECO:0000269" key="11">
    <source>
    </source>
</evidence>
<evidence type="ECO:0000269" key="12">
    <source>
    </source>
</evidence>
<evidence type="ECO:0000269" key="13">
    <source>
    </source>
</evidence>
<evidence type="ECO:0000269" key="14">
    <source>
    </source>
</evidence>
<evidence type="ECO:0000269" key="15">
    <source>
    </source>
</evidence>
<evidence type="ECO:0000269" key="16">
    <source>
    </source>
</evidence>
<evidence type="ECO:0000269" key="17">
    <source>
    </source>
</evidence>
<evidence type="ECO:0000269" key="18">
    <source>
    </source>
</evidence>
<evidence type="ECO:0000269" key="19">
    <source>
    </source>
</evidence>
<evidence type="ECO:0000269" key="20">
    <source>
    </source>
</evidence>
<evidence type="ECO:0000269" key="21">
    <source>
    </source>
</evidence>
<evidence type="ECO:0000269" key="22">
    <source>
    </source>
</evidence>
<evidence type="ECO:0000269" key="23">
    <source>
    </source>
</evidence>
<evidence type="ECO:0000269" key="24">
    <source>
    </source>
</evidence>
<evidence type="ECO:0000269" key="25">
    <source>
    </source>
</evidence>
<evidence type="ECO:0000269" key="26">
    <source>
    </source>
</evidence>
<evidence type="ECO:0000269" key="27">
    <source>
    </source>
</evidence>
<evidence type="ECO:0000269" key="28">
    <source>
    </source>
</evidence>
<evidence type="ECO:0000269" key="29">
    <source>
    </source>
</evidence>
<evidence type="ECO:0000269" key="30">
    <source>
    </source>
</evidence>
<evidence type="ECO:0000269" key="31">
    <source>
    </source>
</evidence>
<evidence type="ECO:0000269" key="32">
    <source>
    </source>
</evidence>
<evidence type="ECO:0000269" key="33">
    <source>
    </source>
</evidence>
<evidence type="ECO:0000269" key="34">
    <source>
    </source>
</evidence>
<evidence type="ECO:0000269" key="35">
    <source ref="4"/>
</evidence>
<evidence type="ECO:0000303" key="36">
    <source>
    </source>
</evidence>
<evidence type="ECO:0000303" key="37">
    <source>
    </source>
</evidence>
<evidence type="ECO:0000303" key="38">
    <source>
    </source>
</evidence>
<evidence type="ECO:0000303" key="39">
    <source>
    </source>
</evidence>
<evidence type="ECO:0000303" key="40">
    <source ref="4"/>
</evidence>
<evidence type="ECO:0000305" key="41"/>
<evidence type="ECO:0000305" key="42">
    <source>
    </source>
</evidence>
<evidence type="ECO:0000305" key="43">
    <source>
    </source>
</evidence>
<evidence type="ECO:0000305" key="44">
    <source>
    </source>
</evidence>
<evidence type="ECO:0000312" key="45">
    <source>
        <dbReference type="HGNC" id="HGNC:10499"/>
    </source>
</evidence>
<evidence type="ECO:0007744" key="46">
    <source>
        <dbReference type="PDB" id="1IRJ"/>
    </source>
</evidence>
<evidence type="ECO:0007744" key="47">
    <source>
        <dbReference type="PDB" id="1XK4"/>
    </source>
</evidence>
<evidence type="ECO:0007744" key="48">
    <source>
    </source>
</evidence>
<evidence type="ECO:0007744" key="49">
    <source>
    </source>
</evidence>
<evidence type="ECO:0007744" key="50">
    <source>
    </source>
</evidence>
<evidence type="ECO:0007744" key="51">
    <source>
    </source>
</evidence>
<evidence type="ECO:0007829" key="52">
    <source>
        <dbReference type="PDB" id="4GGF"/>
    </source>
</evidence>
<evidence type="ECO:0007829" key="53">
    <source>
        <dbReference type="PDB" id="5I8N"/>
    </source>
</evidence>
<reference key="1">
    <citation type="journal article" date="1987" name="Nature">
        <title>Two calcium-binding proteins in infiltrate macrophages of rheumatoid arthritis.</title>
        <authorList>
            <person name="Odink K."/>
            <person name="Cerletti N."/>
            <person name="Bruggen J."/>
            <person name="Clerc R.G."/>
            <person name="Tarcsay L."/>
            <person name="Zwaldo G."/>
            <person name="Gerhards G."/>
            <person name="Schlegel R."/>
            <person name="Sorg C."/>
        </authorList>
    </citation>
    <scope>NUCLEOTIDE SEQUENCE [MRNA]</scope>
    <scope>TISSUE SPECIFICITY</scope>
</reference>
<reference key="2">
    <citation type="journal article" date="1988" name="Mol. Cell. Biol.">
        <title>Cloning and expression of two human genes encoding calcium-binding proteins that are regulated during myeloid differentiation.</title>
        <authorList>
            <person name="Lagasse E."/>
            <person name="Clerc R.G."/>
        </authorList>
    </citation>
    <scope>NUCLEOTIDE SEQUENCE [GENOMIC DNA]</scope>
    <scope>TISSUE SPECIFICITY</scope>
</reference>
<reference key="3">
    <citation type="journal article" date="1989" name="J. Biol. Chem.">
        <title>A protein containing the cystic fibrosis antigen is an inhibitor of protein kinases.</title>
        <authorList>
            <person name="Murao S."/>
            <person name="Collart F.R."/>
            <person name="Huberman E."/>
        </authorList>
    </citation>
    <scope>NUCLEOTIDE SEQUENCE [MRNA]</scope>
    <scope>BLOCKAGE OF N-TERMINUS</scope>
</reference>
<reference key="4">
    <citation type="submission" date="2000-02" db="EMBL/GenBank/DDBJ databases">
        <title>Human gene for migration inhibitory factor-related protein 14 (MRP14), variant allele.</title>
        <authorList>
            <person name="Wang M."/>
            <person name="Xu X."/>
            <person name="Cai Y."/>
            <person name="Xu H."/>
            <person name="Han Y."/>
            <person name="Xu Z."/>
            <person name="Wu M."/>
        </authorList>
    </citation>
    <scope>NUCLEOTIDE SEQUENCE [GENOMIC DNA]</scope>
    <scope>VARIANT ARG-20</scope>
</reference>
<reference key="5">
    <citation type="submission" date="2004-06" db="EMBL/GenBank/DDBJ databases">
        <title>Cloning of human full open reading frames in Gateway(TM) system entry vector (pDONR201).</title>
        <authorList>
            <person name="Halleck A."/>
            <person name="Ebert L."/>
            <person name="Mkoundinya M."/>
            <person name="Schick M."/>
            <person name="Eisenstein S."/>
            <person name="Neubert P."/>
            <person name="Kstrang K."/>
            <person name="Schatten R."/>
            <person name="Shen B."/>
            <person name="Henze S."/>
            <person name="Mar W."/>
            <person name="Korn B."/>
            <person name="Zuo D."/>
            <person name="Hu Y."/>
            <person name="LaBaer J."/>
        </authorList>
    </citation>
    <scope>NUCLEOTIDE SEQUENCE [LARGE SCALE MRNA]</scope>
</reference>
<reference key="6">
    <citation type="journal article" date="2006" name="Nature">
        <title>The DNA sequence and biological annotation of human chromosome 1.</title>
        <authorList>
            <person name="Gregory S.G."/>
            <person name="Barlow K.F."/>
            <person name="McLay K.E."/>
            <person name="Kaul R."/>
            <person name="Swarbreck D."/>
            <person name="Dunham A."/>
            <person name="Scott C.E."/>
            <person name="Howe K.L."/>
            <person name="Woodfine K."/>
            <person name="Spencer C.C.A."/>
            <person name="Jones M.C."/>
            <person name="Gillson C."/>
            <person name="Searle S."/>
            <person name="Zhou Y."/>
            <person name="Kokocinski F."/>
            <person name="McDonald L."/>
            <person name="Evans R."/>
            <person name="Phillips K."/>
            <person name="Atkinson A."/>
            <person name="Cooper R."/>
            <person name="Jones C."/>
            <person name="Hall R.E."/>
            <person name="Andrews T.D."/>
            <person name="Lloyd C."/>
            <person name="Ainscough R."/>
            <person name="Almeida J.P."/>
            <person name="Ambrose K.D."/>
            <person name="Anderson F."/>
            <person name="Andrew R.W."/>
            <person name="Ashwell R.I.S."/>
            <person name="Aubin K."/>
            <person name="Babbage A.K."/>
            <person name="Bagguley C.L."/>
            <person name="Bailey J."/>
            <person name="Beasley H."/>
            <person name="Bethel G."/>
            <person name="Bird C.P."/>
            <person name="Bray-Allen S."/>
            <person name="Brown J.Y."/>
            <person name="Brown A.J."/>
            <person name="Buckley D."/>
            <person name="Burton J."/>
            <person name="Bye J."/>
            <person name="Carder C."/>
            <person name="Chapman J.C."/>
            <person name="Clark S.Y."/>
            <person name="Clarke G."/>
            <person name="Clee C."/>
            <person name="Cobley V."/>
            <person name="Collier R.E."/>
            <person name="Corby N."/>
            <person name="Coville G.J."/>
            <person name="Davies J."/>
            <person name="Deadman R."/>
            <person name="Dunn M."/>
            <person name="Earthrowl M."/>
            <person name="Ellington A.G."/>
            <person name="Errington H."/>
            <person name="Frankish A."/>
            <person name="Frankland J."/>
            <person name="French L."/>
            <person name="Garner P."/>
            <person name="Garnett J."/>
            <person name="Gay L."/>
            <person name="Ghori M.R.J."/>
            <person name="Gibson R."/>
            <person name="Gilby L.M."/>
            <person name="Gillett W."/>
            <person name="Glithero R.J."/>
            <person name="Grafham D.V."/>
            <person name="Griffiths C."/>
            <person name="Griffiths-Jones S."/>
            <person name="Grocock R."/>
            <person name="Hammond S."/>
            <person name="Harrison E.S.I."/>
            <person name="Hart E."/>
            <person name="Haugen E."/>
            <person name="Heath P.D."/>
            <person name="Holmes S."/>
            <person name="Holt K."/>
            <person name="Howden P.J."/>
            <person name="Hunt A.R."/>
            <person name="Hunt S.E."/>
            <person name="Hunter G."/>
            <person name="Isherwood J."/>
            <person name="James R."/>
            <person name="Johnson C."/>
            <person name="Johnson D."/>
            <person name="Joy A."/>
            <person name="Kay M."/>
            <person name="Kershaw J.K."/>
            <person name="Kibukawa M."/>
            <person name="Kimberley A.M."/>
            <person name="King A."/>
            <person name="Knights A.J."/>
            <person name="Lad H."/>
            <person name="Laird G."/>
            <person name="Lawlor S."/>
            <person name="Leongamornlert D.A."/>
            <person name="Lloyd D.M."/>
            <person name="Loveland J."/>
            <person name="Lovell J."/>
            <person name="Lush M.J."/>
            <person name="Lyne R."/>
            <person name="Martin S."/>
            <person name="Mashreghi-Mohammadi M."/>
            <person name="Matthews L."/>
            <person name="Matthews N.S.W."/>
            <person name="McLaren S."/>
            <person name="Milne S."/>
            <person name="Mistry S."/>
            <person name="Moore M.J.F."/>
            <person name="Nickerson T."/>
            <person name="O'Dell C.N."/>
            <person name="Oliver K."/>
            <person name="Palmeiri A."/>
            <person name="Palmer S.A."/>
            <person name="Parker A."/>
            <person name="Patel D."/>
            <person name="Pearce A.V."/>
            <person name="Peck A.I."/>
            <person name="Pelan S."/>
            <person name="Phelps K."/>
            <person name="Phillimore B.J."/>
            <person name="Plumb R."/>
            <person name="Rajan J."/>
            <person name="Raymond C."/>
            <person name="Rouse G."/>
            <person name="Saenphimmachak C."/>
            <person name="Sehra H.K."/>
            <person name="Sheridan E."/>
            <person name="Shownkeen R."/>
            <person name="Sims S."/>
            <person name="Skuce C.D."/>
            <person name="Smith M."/>
            <person name="Steward C."/>
            <person name="Subramanian S."/>
            <person name="Sycamore N."/>
            <person name="Tracey A."/>
            <person name="Tromans A."/>
            <person name="Van Helmond Z."/>
            <person name="Wall M."/>
            <person name="Wallis J.M."/>
            <person name="White S."/>
            <person name="Whitehead S.L."/>
            <person name="Wilkinson J.E."/>
            <person name="Willey D.L."/>
            <person name="Williams H."/>
            <person name="Wilming L."/>
            <person name="Wray P.W."/>
            <person name="Wu Z."/>
            <person name="Coulson A."/>
            <person name="Vaudin M."/>
            <person name="Sulston J.E."/>
            <person name="Durbin R.M."/>
            <person name="Hubbard T."/>
            <person name="Wooster R."/>
            <person name="Dunham I."/>
            <person name="Carter N.P."/>
            <person name="McVean G."/>
            <person name="Ross M.T."/>
            <person name="Harrow J."/>
            <person name="Olson M.V."/>
            <person name="Beck S."/>
            <person name="Rogers J."/>
            <person name="Bentley D.R."/>
        </authorList>
    </citation>
    <scope>NUCLEOTIDE SEQUENCE [LARGE SCALE GENOMIC DNA]</scope>
</reference>
<reference key="7">
    <citation type="submission" date="2005-09" db="EMBL/GenBank/DDBJ databases">
        <authorList>
            <person name="Mural R.J."/>
            <person name="Istrail S."/>
            <person name="Sutton G.G."/>
            <person name="Florea L."/>
            <person name="Halpern A.L."/>
            <person name="Mobarry C.M."/>
            <person name="Lippert R."/>
            <person name="Walenz B."/>
            <person name="Shatkay H."/>
            <person name="Dew I."/>
            <person name="Miller J.R."/>
            <person name="Flanigan M.J."/>
            <person name="Edwards N.J."/>
            <person name="Bolanos R."/>
            <person name="Fasulo D."/>
            <person name="Halldorsson B.V."/>
            <person name="Hannenhalli S."/>
            <person name="Turner R."/>
            <person name="Yooseph S."/>
            <person name="Lu F."/>
            <person name="Nusskern D.R."/>
            <person name="Shue B.C."/>
            <person name="Zheng X.H."/>
            <person name="Zhong F."/>
            <person name="Delcher A.L."/>
            <person name="Huson D.H."/>
            <person name="Kravitz S.A."/>
            <person name="Mouchard L."/>
            <person name="Reinert K."/>
            <person name="Remington K.A."/>
            <person name="Clark A.G."/>
            <person name="Waterman M.S."/>
            <person name="Eichler E.E."/>
            <person name="Adams M.D."/>
            <person name="Hunkapiller M.W."/>
            <person name="Myers E.W."/>
            <person name="Venter J.C."/>
        </authorList>
    </citation>
    <scope>NUCLEOTIDE SEQUENCE [LARGE SCALE GENOMIC DNA]</scope>
</reference>
<reference key="8">
    <citation type="journal article" date="2004" name="Genome Res.">
        <title>The status, quality, and expansion of the NIH full-length cDNA project: the Mammalian Gene Collection (MGC).</title>
        <authorList>
            <consortium name="The MGC Project Team"/>
        </authorList>
    </citation>
    <scope>NUCLEOTIDE SEQUENCE [LARGE SCALE MRNA]</scope>
    <source>
        <tissue>Lung</tissue>
    </source>
</reference>
<reference key="9">
    <citation type="journal article" date="1989" name="Nature">
        <title>Ionomycin-regulated phosphorylation of the myeloid calcium-binding protein p14.</title>
        <authorList>
            <person name="Edgeworth J."/>
            <person name="Freemont P."/>
            <person name="Hogg N."/>
        </authorList>
    </citation>
    <scope>PROTEIN SEQUENCE OF 84-114</scope>
    <scope>PHOSPHORYLATION AT THR-113</scope>
</reference>
<reference key="10">
    <citation type="journal article" date="1989" name="Chem. Pharm. Bull.">
        <title>Amino acid sequences of 60B8 antigens induced in HL-60 cells by 1,25-dihydroxyvitamin D3. The antigens are identical with macrophage-related protein-14 and -8.</title>
        <authorList>
            <person name="Tobe T."/>
            <person name="Murakami K."/>
            <person name="Tomita M."/>
            <person name="Nozawa R."/>
        </authorList>
    </citation>
    <scope>PROTEIN SEQUENCE</scope>
    <scope>BLOCKAGE OF N-TERMINUS</scope>
</reference>
<reference key="11">
    <citation type="journal article" date="1992" name="Electrophoresis">
        <title>Microsequences of 145 proteins recorded in the two-dimensional gel protein database of normal human epidermal keratinocytes.</title>
        <authorList>
            <person name="Rasmussen H.H."/>
            <person name="van Damme J."/>
            <person name="Puype M."/>
            <person name="Gesser B."/>
            <person name="Celis J.E."/>
            <person name="Vandekerckhove J."/>
        </authorList>
    </citation>
    <scope>PROTEIN SEQUENCE OF 11-19; 26-37 AND 94-107</scope>
    <source>
        <tissue>Keratinocyte</tissue>
    </source>
</reference>
<reference key="12">
    <citation type="journal article" date="1993" name="J. Dent. Res.">
        <title>In vitro antimicrobial activity of the human neutrophil cytosolic S-100 protein complex, calprotectin, against Capnocytophaga sputigena.</title>
        <authorList>
            <person name="Miyasaki K.T."/>
            <person name="Bodeau A.L."/>
            <person name="Murthy A.R."/>
            <person name="Lehrer R.I."/>
        </authorList>
    </citation>
    <scope>PROTEIN SEQUENCE OF 5-34</scope>
    <scope>SUBCELLULAR LOCATION</scope>
    <scope>IDENTIFICATION IN THE CALPROTECTIN COMPLEX</scope>
    <scope>FUNCTION</scope>
    <scope>TISSUE SPECIFICITY</scope>
</reference>
<reference key="13">
    <citation type="journal article" date="1997" name="J. Biol. Chem.">
        <title>Myeloid-related protein (MRP) 8 and MRP14, calcium-binding proteins of the S100 family, are secreted by activated monocytes via a novel, tubulin-dependent pathway.</title>
        <authorList>
            <person name="Rammes A."/>
            <person name="Roth J."/>
            <person name="Goebeler M."/>
            <person name="Klempt M."/>
            <person name="Hartmann M."/>
            <person name="Sorg C."/>
        </authorList>
    </citation>
    <scope>SUBCELLULAR LOCATION</scope>
    <scope>SUBUNIT</scope>
    <scope>TISSUE SPECIFICITY</scope>
</reference>
<reference key="14">
    <citation type="journal article" date="2001" name="Biochem. Biophys. Res. Commun.">
        <title>The microbial receptor CEACAM3 is linked to the calprotectin complex in granulocytes.</title>
        <authorList>
            <person name="Streichert T."/>
            <person name="Ebrahimnejad A."/>
            <person name="Ganzer S."/>
            <person name="Flayeh R."/>
            <person name="Wagener C."/>
            <person name="Bruemmer J."/>
        </authorList>
    </citation>
    <scope>INTERACTION WITH CEACAM3</scope>
</reference>
<reference key="15">
    <citation type="journal article" date="2003" name="J. Immunol.">
        <title>Proinflammatory activities of S100: proteins S100A8, S100A9, and S100A8/A9 induce neutrophil chemotaxis and adhesion.</title>
        <authorList>
            <person name="Ryckman C."/>
            <person name="Vandal K."/>
            <person name="Rouleau P."/>
            <person name="Talbot M."/>
            <person name="Tessier P.A."/>
        </authorList>
    </citation>
    <scope>FUNCTION</scope>
</reference>
<reference key="16">
    <citation type="journal article" date="2004" name="Blood">
        <title>MRP8 and MRP14 control microtubule reorganization during transendothelial migration of phagocytes.</title>
        <authorList>
            <person name="Vogl T."/>
            <person name="Ludwig S."/>
            <person name="Goebeler M."/>
            <person name="Strey A."/>
            <person name="Thorey I.S."/>
            <person name="Reichelt R."/>
            <person name="Foell D."/>
            <person name="Gerke V."/>
            <person name="Manitz M.P."/>
            <person name="Nacken W."/>
            <person name="Werner S."/>
            <person name="Sorg C."/>
            <person name="Roth J."/>
        </authorList>
    </citation>
    <scope>FUNCTION</scope>
    <scope>PHOSPHORYLATION AT THR-113</scope>
</reference>
<reference key="17">
    <citation type="journal article" date="2005" name="Blood">
        <title>Myeloid-related proteins 8 and 14 induce a specific inflammatory response in human microvascular endothelial cells.</title>
        <authorList>
            <person name="Viemann D."/>
            <person name="Strey A."/>
            <person name="Janning A."/>
            <person name="Jurk K."/>
            <person name="Klimmek K."/>
            <person name="Vogl T."/>
            <person name="Hirono K."/>
            <person name="Ichida F."/>
            <person name="Foell D."/>
            <person name="Kehrel B."/>
            <person name="Gerke V."/>
            <person name="Sorg C."/>
            <person name="Roth J."/>
        </authorList>
    </citation>
    <scope>FUNCTION</scope>
    <scope>SUBCELLULAR LOCATION</scope>
    <scope>TISSUE SPECIFICITY</scope>
    <scope>IDENTIFICATION BY MASS SPECTROMETRY</scope>
</reference>
<reference key="18">
    <citation type="journal article" date="2005" name="FASEB J.">
        <title>The arachidonic acid-binding protein S100A8/A9 promotes NADPH oxidase activation by interaction with p67phox and Rac-2.</title>
        <authorList>
            <person name="Kerkhoff C."/>
            <person name="Nacken W."/>
            <person name="Benedyk M."/>
            <person name="Dagher M.C."/>
            <person name="Sopalla C."/>
            <person name="Doussiere J."/>
        </authorList>
    </citation>
    <scope>FUNCTION</scope>
    <scope>INTERACTION WITH NCF2/P67PHOX; RAC1 AND RAC2</scope>
</reference>
<reference key="19">
    <citation type="journal article" date="2005" name="J. Immunol.">
        <title>Myeloid-related protein-14 is a p38 MAPK substrate in human neutrophils.</title>
        <authorList>
            <person name="Lominadze G."/>
            <person name="Rane M.J."/>
            <person name="Merchant M."/>
            <person name="Cai J."/>
            <person name="Ward R.A."/>
            <person name="McLeish K.R."/>
        </authorList>
    </citation>
    <scope>PHOSPHORYLATION AT THR-113</scope>
</reference>
<reference key="20">
    <citation type="journal article" date="2005" name="Mediators Inflamm.">
        <title>Regulation of S100A8/A9 (calprotectin) binding to tumor cells by zinc ion and its implication for apoptosis-inducing activity.</title>
        <authorList>
            <person name="Nakatani Y."/>
            <person name="Yamazaki M."/>
            <person name="Chazin W.J."/>
            <person name="Yui S."/>
        </authorList>
    </citation>
    <scope>FUNCTION</scope>
    <scope>INHIBITION BY ZINC IONS</scope>
    <scope>SUBUNIT</scope>
</reference>
<reference key="21">
    <citation type="journal article" date="2008" name="J. Biol. Chem.">
        <title>Interaction between S100A8/A9 and annexin A6 is involved in the calcium-induced cell surface exposition of S100A8/A9.</title>
        <authorList>
            <person name="Bode G."/>
            <person name="Lueken A."/>
            <person name="Kerkhoff C."/>
            <person name="Roth J."/>
            <person name="Ludwig S."/>
            <person name="Nacken W."/>
        </authorList>
    </citation>
    <scope>SUBCELLULAR LOCATION</scope>
    <scope>INTERACTION WITH ANXA6</scope>
</reference>
<reference key="22">
    <citation type="journal article" date="2008" name="J. Proteome Res.">
        <title>Phosphorylation analysis of primary human T lymphocytes using sequential IMAC and titanium oxide enrichment.</title>
        <authorList>
            <person name="Carrascal M."/>
            <person name="Ovelleiro D."/>
            <person name="Casas V."/>
            <person name="Gay M."/>
            <person name="Abian J."/>
        </authorList>
    </citation>
    <scope>PHOSPHORYLATION [LARGE SCALE ANALYSIS] AT THR-113</scope>
    <scope>IDENTIFICATION BY MASS SPECTROMETRY [LARGE SCALE ANALYSIS]</scope>
    <source>
        <tissue>T-cell</tissue>
    </source>
</reference>
<reference key="23">
    <citation type="journal article" date="2008" name="Proteomics">
        <title>Large-scale phosphoproteome analysis of human liver tissue by enrichment and fractionation of phosphopeptides with strong anion exchange chromatography.</title>
        <authorList>
            <person name="Han G."/>
            <person name="Ye M."/>
            <person name="Zhou H."/>
            <person name="Jiang X."/>
            <person name="Feng S."/>
            <person name="Jiang X."/>
            <person name="Tian R."/>
            <person name="Wan D."/>
            <person name="Zou H."/>
            <person name="Gu J."/>
        </authorList>
    </citation>
    <scope>PHOSPHORYLATION [LARGE SCALE ANALYSIS] AT THR-113</scope>
    <scope>IDENTIFICATION BY MASS SPECTROMETRY [LARGE SCALE ANALYSIS]</scope>
    <source>
        <tissue>Liver</tissue>
    </source>
</reference>
<reference key="24">
    <citation type="journal article" date="2009" name="Antiinflamm. Antiallergy Agents Med. Chem.">
        <title>Anti-infective protective properties of S100 calgranulins.</title>
        <authorList>
            <person name="Hsu K."/>
            <person name="Champaiboon C."/>
            <person name="Guenther B.D."/>
            <person name="Sorenson B.S."/>
            <person name="Khammanivong A."/>
            <person name="Ross K.F."/>
            <person name="Geczy C.L."/>
            <person name="Herzberg M.C."/>
        </authorList>
    </citation>
    <scope>REVIEW</scope>
</reference>
<reference key="25">
    <citation type="journal article" date="2009" name="Biochem. J.">
        <title>A novel p53 target gene, S100A9, induces p53-dependent cellular apoptosis and mediates the p53 apoptosis pathway.</title>
        <authorList>
            <person name="Li C."/>
            <person name="Chen H."/>
            <person name="Ding F."/>
            <person name="Zhang Y."/>
            <person name="Luo A."/>
            <person name="Wang M."/>
            <person name="Liu Z."/>
        </authorList>
    </citation>
    <scope>FUNCTION</scope>
</reference>
<reference key="26">
    <citation type="journal article" date="2009" name="Eur. J. Pharmacol.">
        <title>S100A8/A9: a Janus-faced molecule in cancer therapy and tumorgenesis.</title>
        <authorList>
            <person name="Ghavami S."/>
            <person name="Chitayat S."/>
            <person name="Hashemi M."/>
            <person name="Eshraghi M."/>
            <person name="Chazin W.J."/>
            <person name="Halayko A.J."/>
            <person name="Kerkhoff C."/>
        </authorList>
    </citation>
    <scope>REVIEW</scope>
</reference>
<reference key="27">
    <citation type="journal article" date="2009" name="FEMS Immunol. Med. Microbiol.">
        <title>Substitution of methionine 63 or 83 in S100A9 and cysteine 42 in S100A8 abrogate the antifungal activities of S100A8/A9: potential role for oxidative regulation.</title>
        <authorList>
            <person name="Sroussi H.Y."/>
            <person name="Koehler G.A."/>
            <person name="Agabian N."/>
            <person name="Villines D."/>
            <person name="Palefsky J.M."/>
        </authorList>
    </citation>
    <scope>FUNCTION</scope>
    <scope>SUBUNIT</scope>
    <scope>MUTAGENESIS OF MET-63; MET-81 AND MET-83</scope>
    <scope>INHIBITION BY ZINC IONS</scope>
</reference>
<reference key="28">
    <citation type="journal article" date="2009" name="J. Biol. Chem.">
        <title>Calprotectin S100A9 calcium-binding loops I and II are essential for keratinocyte resistance to bacterial invasion.</title>
        <authorList>
            <person name="Champaiboon C."/>
            <person name="Sappington K.J."/>
            <person name="Guenther B.D."/>
            <person name="Ross K.F."/>
            <person name="Herzberg M.C."/>
        </authorList>
    </citation>
    <scope>FUNCTION</scope>
    <scope>SUBUNIT</scope>
    <scope>MUTAGENESIS OF GLU-36 AND GLU-78</scope>
</reference>
<reference key="29">
    <citation type="journal article" date="2009" name="J. Leukoc. Biol.">
        <title>The endogenous Toll-like receptor 4 agonist S100A8/S100A9 (calprotectin) as innate amplifier of infection, autoimmunity, and cancer.</title>
        <authorList>
            <person name="Ehrchen J.M."/>
            <person name="Sunderkoetter C."/>
            <person name="Foell D."/>
            <person name="Vogl T."/>
            <person name="Roth J."/>
        </authorList>
    </citation>
    <scope>REVIEW</scope>
</reference>
<reference key="30">
    <citation type="journal article" date="2009" name="PLoS Biol.">
        <title>Identification of human S100A9 as a novel target for treatment of autoimmune disease via binding to quinoline-3-carboxamides.</title>
        <authorList>
            <person name="Bjoerk P."/>
            <person name="Bjoerk A."/>
            <person name="Vogl T."/>
            <person name="Stenstroem M."/>
            <person name="Liberg D."/>
            <person name="Olsson A."/>
            <person name="Roth J."/>
            <person name="Ivars F."/>
            <person name="Leanderson T."/>
        </authorList>
    </citation>
    <scope>FUNCTION</scope>
    <scope>SUBCELLULAR LOCATION</scope>
    <scope>SUBUNIT</scope>
    <scope>INTERACTION WITH TLR4; LY96 AND AGER</scope>
    <scope>QUINOLINE-3-CARBOXAMIDE BINDING</scope>
</reference>
<reference key="31">
    <citation type="journal article" date="2010" name="Cell Res.">
        <title>S100A8/A9 induces autophagy and apoptosis via ROS-mediated cross-talk between mitochondria and lysosomes that involves BNIP3.</title>
        <authorList>
            <person name="Ghavami S."/>
            <person name="Eshragi M."/>
            <person name="Ande S.R."/>
            <person name="Chazin W.J."/>
            <person name="Klonisch T."/>
            <person name="Halayko A.J."/>
            <person name="McNeill K.D."/>
            <person name="Hashemi M."/>
            <person name="Kerkhoff C."/>
            <person name="Los M."/>
        </authorList>
    </citation>
    <scope>FUNCTION</scope>
</reference>
<reference key="32">
    <citation type="journal article" date="2010" name="Immunol. Cell Biol.">
        <title>S100 Calgranulins in inflammatory arthritis.</title>
        <authorList>
            <person name="Perera C."/>
            <person name="McNeil H.P."/>
            <person name="Geczy C.L."/>
        </authorList>
    </citation>
    <scope>REVIEW</scope>
</reference>
<reference key="33">
    <citation type="journal article" date="2010" name="J. Leukoc. Biol.">
        <title>Induction of neutrophil degranulation by S100A9 via a MAPK-dependent mechanism.</title>
        <authorList>
            <person name="Simard J.C."/>
            <person name="Girard D."/>
            <person name="Tessier P.A."/>
        </authorList>
    </citation>
    <scope>FUNCTION</scope>
</reference>
<reference key="34">
    <citation type="journal article" date="2010" name="Sci. Signal.">
        <title>Quantitative phosphoproteomics reveals widespread full phosphorylation site occupancy during mitosis.</title>
        <authorList>
            <person name="Olsen J.V."/>
            <person name="Vermeulen M."/>
            <person name="Santamaria A."/>
            <person name="Kumar C."/>
            <person name="Miller M.L."/>
            <person name="Jensen L.J."/>
            <person name="Gnad F."/>
            <person name="Cox J."/>
            <person name="Jensen T.S."/>
            <person name="Nigg E.A."/>
            <person name="Brunak S."/>
            <person name="Mann M."/>
        </authorList>
    </citation>
    <scope>PHOSPHORYLATION [LARGE SCALE ANALYSIS] AT THR-113</scope>
    <scope>IDENTIFICATION BY MASS SPECTROMETRY [LARGE SCALE ANALYSIS]</scope>
    <source>
        <tissue>Cervix carcinoma</tissue>
    </source>
</reference>
<reference key="35">
    <citation type="journal article" date="2011" name="Amino Acids">
        <title>Inflammation-associated S100 proteins: new mechanisms that regulate function.</title>
        <authorList>
            <person name="Goyette J."/>
            <person name="Geczy C.L."/>
        </authorList>
    </citation>
    <scope>REVIEW</scope>
</reference>
<reference key="36">
    <citation type="journal article" date="2011" name="BMC Syst. Biol.">
        <title>Initial characterization of the human central proteome.</title>
        <authorList>
            <person name="Burkard T.R."/>
            <person name="Planyavsky M."/>
            <person name="Kaupe I."/>
            <person name="Breitwieser F.P."/>
            <person name="Buerckstuemmer T."/>
            <person name="Bennett K.L."/>
            <person name="Superti-Furga G."/>
            <person name="Colinge J."/>
        </authorList>
    </citation>
    <scope>IDENTIFICATION BY MASS SPECTROMETRY [LARGE SCALE ANALYSIS]</scope>
</reference>
<reference key="37">
    <citation type="journal article" date="2011" name="J. Immunol.">
        <title>Damage-associated molecular pattern S100A9 increases bactericidal activity of human neutrophils by enhancing phagocytosis.</title>
        <authorList>
            <person name="Simard J.C."/>
            <person name="Simon M.M."/>
            <person name="Tessier P.A."/>
            <person name="Girard D."/>
        </authorList>
    </citation>
    <scope>FUNCTION</scope>
</reference>
<reference key="38">
    <citation type="journal article" date="2012" name="Arterioscler. Thromb. Vasc. Biol.">
        <title>S100A8 and S100A9 in cardiovascular biology and disease.</title>
        <authorList>
            <person name="Averill M.M."/>
            <person name="Kerkhoff C."/>
            <person name="Bornfeldt K.E."/>
        </authorList>
    </citation>
    <scope>REVIEW</scope>
</reference>
<reference key="39">
    <citation type="journal article" date="2012" name="Immunology">
        <title>Induction of nuclear factor-kappaB responses by the S100A9 protein is Toll-like receptor-4-dependent.</title>
        <authorList>
            <person name="Riva M."/>
            <person name="Kaellberg E."/>
            <person name="Bjoerk P."/>
            <person name="Hancz D."/>
            <person name="Vogl T."/>
            <person name="Roth J."/>
            <person name="Ivars F."/>
            <person name="Leanderson T."/>
        </authorList>
    </citation>
    <scope>FUNCTION</scope>
</reference>
<reference key="40">
    <citation type="journal article" date="2012" name="Inflammation">
        <title>Dynamic mobility of immunological cells expressing S100A8 and S100A9 in vivo: a variety of functional roles of the two proteins as regulators in acute inflammatory reaction.</title>
        <authorList>
            <person name="Koike A."/>
            <person name="Arai S."/>
            <person name="Yamada S."/>
            <person name="Nagae A."/>
            <person name="Saita N."/>
            <person name="Itoh H."/>
            <person name="Uemoto S."/>
            <person name="Totani M."/>
            <person name="Ikemoto M."/>
        </authorList>
    </citation>
    <scope>FUNCTION</scope>
</reference>
<reference key="41">
    <citation type="journal article" date="2012" name="Int. J. Mol. Sci.">
        <title>Pro-inflammatory S100A8 and S100A9 proteins: self-assembly into multifunctional native and amyloid complexes.</title>
        <authorList>
            <person name="Vogl T."/>
            <person name="Gharibyan A.L."/>
            <person name="Morozova-Roche L.A."/>
        </authorList>
    </citation>
    <scope>REVIEW</scope>
</reference>
<reference key="42">
    <citation type="journal article" date="2012" name="J. Innate Immun.">
        <title>S100A8 and S100A9: new insights into their roles in malignancy.</title>
        <authorList>
            <person name="Srikrishna G."/>
        </authorList>
    </citation>
    <scope>REVIEW</scope>
</reference>
<reference key="43">
    <citation type="journal article" date="2012" name="PLoS ONE">
        <title>Molecular interface of S100A8 with cytochrome b and NADPH oxidase activation.</title>
        <authorList>
            <person name="Berthier S."/>
            <person name="Nguyen M.V."/>
            <person name="Baillet A."/>
            <person name="Hograindleur M.A."/>
            <person name="Paclet M.H."/>
            <person name="Polack B."/>
            <person name="Morel F."/>
        </authorList>
    </citation>
    <scope>FUNCTION</scope>
    <scope>SUBCELLULAR LOCATION</scope>
    <scope>INTERACTION WITH CYBA AND CYBB</scope>
</reference>
<reference key="44">
    <citation type="journal article" date="2012" name="PLoS ONE">
        <title>MRP14 (S100A9) protein interacts with Alzheimer beta-amyloid peptide and induces its fibrillization.</title>
        <authorList>
            <person name="Zhang C."/>
            <person name="Liu Y."/>
            <person name="Gilthorpe J."/>
            <person name="van der Maarel J.R."/>
        </authorList>
    </citation>
    <scope>INTERACTION WITH APP</scope>
</reference>
<reference key="45">
    <citation type="journal article" date="2012" name="PLoS ONE">
        <title>Constitutive neutrophil apoptosis: regulation by cell concentration via S100 A8/9 and the MEK-ERK pathway.</title>
        <authorList>
            <person name="Atallah M."/>
            <person name="Krispin A."/>
            <person name="Trahtemberg U."/>
            <person name="Ben-Hamron S."/>
            <person name="Grau A."/>
            <person name="Verbovetski I."/>
            <person name="Mevorach D."/>
        </authorList>
    </citation>
    <scope>FUNCTION</scope>
    <scope>IDENTIFICATION BY MASS SPECTROMETRY</scope>
</reference>
<reference key="46">
    <citation type="journal article" date="2014" name="Cell">
        <title>Target-selective protein S-nitrosylation by sequence motif recognition.</title>
        <authorList>
            <person name="Jia J."/>
            <person name="Arif A."/>
            <person name="Terenzi F."/>
            <person name="Willard B."/>
            <person name="Plow E.F."/>
            <person name="Hazen S.L."/>
            <person name="Fox P.L."/>
        </authorList>
    </citation>
    <scope>FUNCTION</scope>
    <scope>ASSEMBLY IN THE INOS-S100A8/A9 COMPLEX</scope>
    <scope>MUTAGENESIS OF CYS-3</scope>
    <scope>S-NITROSYLATION AT CYS-3</scope>
</reference>
<reference key="47">
    <citation type="journal article" date="2014" name="J. Proteomics">
        <title>An enzyme assisted RP-RPLC approach for in-depth analysis of human liver phosphoproteome.</title>
        <authorList>
            <person name="Bian Y."/>
            <person name="Song C."/>
            <person name="Cheng K."/>
            <person name="Dong M."/>
            <person name="Wang F."/>
            <person name="Huang J."/>
            <person name="Sun D."/>
            <person name="Wang L."/>
            <person name="Ye M."/>
            <person name="Zou H."/>
        </authorList>
    </citation>
    <scope>PHOSPHORYLATION [LARGE SCALE ANALYSIS] AT THR-113</scope>
    <scope>IDENTIFICATION BY MASS SPECTROMETRY [LARGE SCALE ANALYSIS]</scope>
    <source>
        <tissue>Liver</tissue>
    </source>
</reference>
<reference key="48">
    <citation type="journal article" date="2015" name="FASEB J.">
        <title>Glycosylation-dependent interaction between CD69 and S100A8/S100A9 complex is required for regulatory T-cell differentiation.</title>
        <authorList>
            <person name="Lin C.R."/>
            <person name="Wei T.Y."/>
            <person name="Tsai H.Y."/>
            <person name="Wu Y.T."/>
            <person name="Wu P.Y."/>
            <person name="Chen S.T."/>
        </authorList>
    </citation>
    <scope>FUNCTION</scope>
    <scope>INTERACTION WITH CD69</scope>
</reference>
<reference key="49">
    <citation type="journal article" date="2002" name="J. Mol. Biol.">
        <title>The crystal structure of human MRP14 (S100A9), a Ca(2+)-dependent regulator protein in inflammatory process.</title>
        <authorList>
            <person name="Itou H."/>
            <person name="Yao M."/>
            <person name="Fujita I."/>
            <person name="Watanabe N."/>
            <person name="Suzuki M."/>
            <person name="Nishihira J."/>
            <person name="Tanaka I."/>
        </authorList>
    </citation>
    <scope>X-RAY CRYSTALLOGRAPHY (2.1 ANGSTROMS) IN COMPLEX WITH CALCIUM IONS</scope>
    <scope>MASS SPECTROMETRY</scope>
    <scope>SUBUNIT</scope>
</reference>
<reference key="50">
    <citation type="journal article" date="2007" name="J. Mol. Biol.">
        <title>The crystal structure of the human (S100A8/S100A9)2 heterotetramer, calprotectin, illustrates how conformational changes of interacting alpha-helices can determine specific association of two EF-hand proteins.</title>
        <authorList>
            <person name="Korndoerfer I.P."/>
            <person name="Brueckner F."/>
            <person name="Skerra A."/>
        </authorList>
    </citation>
    <scope>X-RAY CRYSTALLOGRAPHY (1.8 ANGSTROMS) OF 4-114 IN COMPLEX WITH S100A8 AND CALCIUM</scope>
    <scope>SUBUNIT</scope>
    <scope>ZINC-BINDING</scope>
</reference>
<proteinExistence type="evidence at protein level"/>
<protein>
    <recommendedName>
        <fullName>Protein S100-A9</fullName>
    </recommendedName>
    <alternativeName>
        <fullName>Calgranulin-B</fullName>
    </alternativeName>
    <alternativeName>
        <fullName>Calprotectin L1H subunit</fullName>
    </alternativeName>
    <alternativeName>
        <fullName>Leukocyte L1 complex heavy chain</fullName>
    </alternativeName>
    <alternativeName>
        <fullName evidence="40">Migration inhibitory factor-related protein 14</fullName>
        <shortName evidence="40">MRP-14</shortName>
        <shortName evidence="39">p14</shortName>
    </alternativeName>
    <alternativeName>
        <fullName evidence="36">S100 calcium-binding protein A9</fullName>
    </alternativeName>
</protein>
<accession>P06702</accession>
<accession>D3DV36</accession>
<accession>Q6FGA1</accession>
<accession>Q9NYM0</accession>
<accession>Q9UCJ1</accession>
<name>S10A9_HUMAN</name>
<sequence>MTCKMSQLERNIETIINTFHQYSVKLGHPDTLNQGEFKELVRKDLQNFLKKENKNEKVIEHIMEDLDTNADKQLSFEEFIMLMARLTWASHEKMHEGDEGPGHHHKPGLGEGTP</sequence>